<keyword id="KW-0963">Cytoplasm</keyword>
<keyword id="KW-0238">DNA-binding</keyword>
<keyword id="KW-1185">Reference proteome</keyword>
<keyword id="KW-0804">Transcription</keyword>
<keyword id="KW-0805">Transcription regulation</keyword>
<proteinExistence type="inferred from homology"/>
<sequence length="246" mass="26423">MAGHSKWANTRHRKAAQDAKRGKIFTKIIRELVTAAKLGGGDPDANPRLRAAVDKALSNNMTRDTLNRAIARGVGGDDDANMETIIYEGYGPGGTAIMIECLSDNRNRTVAEVRHAFSKCGGNLGTDGSVAYLFSKKGVISFEKGDEDTIMEAALEAGAEDVVTYDDGAIDVYTAWEEMGKVRDALEAAGLKADSAEVSMLPSTKADMDAETAPKLMRLIDMLEDCDDVQEVYHNGEISDEVAATL</sequence>
<gene>
    <name evidence="1" type="primary">yebC</name>
    <name type="ordered locus">SDY_1151</name>
</gene>
<evidence type="ECO:0000255" key="1">
    <source>
        <dbReference type="HAMAP-Rule" id="MF_00693"/>
    </source>
</evidence>
<evidence type="ECO:0000256" key="2">
    <source>
        <dbReference type="SAM" id="MobiDB-lite"/>
    </source>
</evidence>
<reference key="1">
    <citation type="journal article" date="2005" name="Nucleic Acids Res.">
        <title>Genome dynamics and diversity of Shigella species, the etiologic agents of bacillary dysentery.</title>
        <authorList>
            <person name="Yang F."/>
            <person name="Yang J."/>
            <person name="Zhang X."/>
            <person name="Chen L."/>
            <person name="Jiang Y."/>
            <person name="Yan Y."/>
            <person name="Tang X."/>
            <person name="Wang J."/>
            <person name="Xiong Z."/>
            <person name="Dong J."/>
            <person name="Xue Y."/>
            <person name="Zhu Y."/>
            <person name="Xu X."/>
            <person name="Sun L."/>
            <person name="Chen S."/>
            <person name="Nie H."/>
            <person name="Peng J."/>
            <person name="Xu J."/>
            <person name="Wang Y."/>
            <person name="Yuan Z."/>
            <person name="Wen Y."/>
            <person name="Yao Z."/>
            <person name="Shen Y."/>
            <person name="Qiang B."/>
            <person name="Hou Y."/>
            <person name="Yu J."/>
            <person name="Jin Q."/>
        </authorList>
    </citation>
    <scope>NUCLEOTIDE SEQUENCE [LARGE SCALE GENOMIC DNA]</scope>
    <source>
        <strain>Sd197</strain>
    </source>
</reference>
<organism>
    <name type="scientific">Shigella dysenteriae serotype 1 (strain Sd197)</name>
    <dbReference type="NCBI Taxonomy" id="300267"/>
    <lineage>
        <taxon>Bacteria</taxon>
        <taxon>Pseudomonadati</taxon>
        <taxon>Pseudomonadota</taxon>
        <taxon>Gammaproteobacteria</taxon>
        <taxon>Enterobacterales</taxon>
        <taxon>Enterobacteriaceae</taxon>
        <taxon>Shigella</taxon>
    </lineage>
</organism>
<accession>Q32H97</accession>
<comment type="subcellular location">
    <subcellularLocation>
        <location evidence="1">Cytoplasm</location>
    </subcellularLocation>
</comment>
<comment type="similarity">
    <text evidence="1">Belongs to the TACO1 family.</text>
</comment>
<protein>
    <recommendedName>
        <fullName evidence="1">Probable transcriptional regulatory protein YebC</fullName>
    </recommendedName>
</protein>
<dbReference type="EMBL" id="CP000034">
    <property type="protein sequence ID" value="ABB61308.1"/>
    <property type="molecule type" value="Genomic_DNA"/>
</dbReference>
<dbReference type="RefSeq" id="WP_000907249.1">
    <property type="nucleotide sequence ID" value="NC_007606.1"/>
</dbReference>
<dbReference type="RefSeq" id="YP_402799.1">
    <property type="nucleotide sequence ID" value="NC_007606.1"/>
</dbReference>
<dbReference type="SMR" id="Q32H97"/>
<dbReference type="STRING" id="300267.SDY_1151"/>
<dbReference type="EnsemblBacteria" id="ABB61308">
    <property type="protein sequence ID" value="ABB61308"/>
    <property type="gene ID" value="SDY_1151"/>
</dbReference>
<dbReference type="KEGG" id="sdy:SDY_1151"/>
<dbReference type="PATRIC" id="fig|300267.13.peg.1355"/>
<dbReference type="HOGENOM" id="CLU_062974_2_2_6"/>
<dbReference type="Proteomes" id="UP000002716">
    <property type="component" value="Chromosome"/>
</dbReference>
<dbReference type="GO" id="GO:0005829">
    <property type="term" value="C:cytosol"/>
    <property type="evidence" value="ECO:0007669"/>
    <property type="project" value="TreeGrafter"/>
</dbReference>
<dbReference type="GO" id="GO:0003677">
    <property type="term" value="F:DNA binding"/>
    <property type="evidence" value="ECO:0007669"/>
    <property type="project" value="UniProtKB-UniRule"/>
</dbReference>
<dbReference type="GO" id="GO:0006355">
    <property type="term" value="P:regulation of DNA-templated transcription"/>
    <property type="evidence" value="ECO:0007669"/>
    <property type="project" value="UniProtKB-UniRule"/>
</dbReference>
<dbReference type="FunFam" id="1.10.10.200:FF:000001">
    <property type="entry name" value="Probable transcriptional regulatory protein YebC"/>
    <property type="match status" value="1"/>
</dbReference>
<dbReference type="FunFam" id="3.30.70.980:FF:000002">
    <property type="entry name" value="Probable transcriptional regulatory protein YebC"/>
    <property type="match status" value="1"/>
</dbReference>
<dbReference type="Gene3D" id="1.10.10.200">
    <property type="match status" value="1"/>
</dbReference>
<dbReference type="Gene3D" id="3.30.70.980">
    <property type="match status" value="2"/>
</dbReference>
<dbReference type="HAMAP" id="MF_00693">
    <property type="entry name" value="Transcrip_reg_TACO1"/>
    <property type="match status" value="1"/>
</dbReference>
<dbReference type="InterPro" id="IPR017856">
    <property type="entry name" value="Integrase-like_N"/>
</dbReference>
<dbReference type="InterPro" id="IPR048300">
    <property type="entry name" value="TACO1_YebC-like_2nd/3rd_dom"/>
</dbReference>
<dbReference type="InterPro" id="IPR049083">
    <property type="entry name" value="TACO1_YebC_N"/>
</dbReference>
<dbReference type="InterPro" id="IPR002876">
    <property type="entry name" value="Transcrip_reg_TACO1-like"/>
</dbReference>
<dbReference type="InterPro" id="IPR026564">
    <property type="entry name" value="Transcrip_reg_TACO1-like_dom3"/>
</dbReference>
<dbReference type="InterPro" id="IPR029072">
    <property type="entry name" value="YebC-like"/>
</dbReference>
<dbReference type="NCBIfam" id="NF001030">
    <property type="entry name" value="PRK00110.1"/>
    <property type="match status" value="1"/>
</dbReference>
<dbReference type="NCBIfam" id="NF009044">
    <property type="entry name" value="PRK12378.1"/>
    <property type="match status" value="1"/>
</dbReference>
<dbReference type="NCBIfam" id="TIGR01033">
    <property type="entry name" value="YebC/PmpR family DNA-binding transcriptional regulator"/>
    <property type="match status" value="1"/>
</dbReference>
<dbReference type="PANTHER" id="PTHR12532:SF6">
    <property type="entry name" value="TRANSCRIPTIONAL REGULATORY PROTEIN YEBC-RELATED"/>
    <property type="match status" value="1"/>
</dbReference>
<dbReference type="PANTHER" id="PTHR12532">
    <property type="entry name" value="TRANSLATIONAL ACTIVATOR OF CYTOCHROME C OXIDASE 1"/>
    <property type="match status" value="1"/>
</dbReference>
<dbReference type="Pfam" id="PF20772">
    <property type="entry name" value="TACO1_YebC_N"/>
    <property type="match status" value="1"/>
</dbReference>
<dbReference type="Pfam" id="PF01709">
    <property type="entry name" value="Transcrip_reg"/>
    <property type="match status" value="1"/>
</dbReference>
<dbReference type="SUPFAM" id="SSF75625">
    <property type="entry name" value="YebC-like"/>
    <property type="match status" value="1"/>
</dbReference>
<name>YEBC_SHIDS</name>
<feature type="chain" id="PRO_0000257130" description="Probable transcriptional regulatory protein YebC">
    <location>
        <begin position="1"/>
        <end position="246"/>
    </location>
</feature>
<feature type="region of interest" description="Disordered" evidence="2">
    <location>
        <begin position="1"/>
        <end position="20"/>
    </location>
</feature>